<comment type="function">
    <text evidence="1 2">Transcriptional repressor (By similarity). Plays a role in the repression of hematopoietic precursor cell growth (By similarity). Promotes IL2 deprivation-induced apoptosis in T-lymphocytes, via repression of TSC22D3/GILZ transcription and activation of the caspase cascade (By similarity). Positively regulates cell death in response to TGFB3 during mammary gland involution (By similarity).</text>
</comment>
<comment type="subunit">
    <text evidence="1 2">Forms homodimers (By similarity). Forms a heterodimer with TSC22D4/THG1 (By similarity). Interacts with histone H1-2 (By similarity). Interacts with GNL3 (By similarity).</text>
</comment>
<comment type="subcellular location">
    <subcellularLocation>
        <location evidence="1">Cytoplasm</location>
    </subcellularLocation>
    <subcellularLocation>
        <location evidence="1">Nucleus</location>
    </subcellularLocation>
</comment>
<comment type="similarity">
    <text evidence="4">Belongs to the TSC-22/Dip/Bun family.</text>
</comment>
<proteinExistence type="evidence at transcript level"/>
<protein>
    <recommendedName>
        <fullName evidence="2">TSC22 domain family protein 1</fullName>
    </recommendedName>
</protein>
<sequence length="144" mass="15680">MKSQWCRPVAMDLGVYQLRHFSISFLSSLLGTENASVRLDNSSSGASVVAIDNKIEQAMDLVKSHLMYAVREEVEVLKEQIKELIEKNSQLEQENNLLKTLASPEQLAQFQAQLQTGSPPATTQPQGTTQPPAQPASQGSGPTA</sequence>
<accession>Q3MHL6</accession>
<feature type="chain" id="PRO_0000285808" description="TSC22 domain family protein 1">
    <location>
        <begin position="1"/>
        <end position="144"/>
    </location>
</feature>
<feature type="region of interest" description="Leucine-zipper">
    <location>
        <begin position="77"/>
        <end position="98"/>
    </location>
</feature>
<feature type="region of interest" description="Disordered" evidence="3">
    <location>
        <begin position="109"/>
        <end position="144"/>
    </location>
</feature>
<feature type="compositionally biased region" description="Low complexity" evidence="3">
    <location>
        <begin position="115"/>
        <end position="144"/>
    </location>
</feature>
<reference key="1">
    <citation type="submission" date="2005-09" db="EMBL/GenBank/DDBJ databases">
        <authorList>
            <consortium name="NIH - Mammalian Gene Collection (MGC) project"/>
        </authorList>
    </citation>
    <scope>NUCLEOTIDE SEQUENCE [LARGE SCALE MRNA]</scope>
    <source>
        <strain>Hereford</strain>
        <tissue>Fetal liver</tissue>
    </source>
</reference>
<dbReference type="EMBL" id="BC105192">
    <property type="protein sequence ID" value="AAI05193.1"/>
    <property type="molecule type" value="mRNA"/>
</dbReference>
<dbReference type="RefSeq" id="NP_001029549.1">
    <property type="nucleotide sequence ID" value="NM_001034377.2"/>
</dbReference>
<dbReference type="SMR" id="Q3MHL6"/>
<dbReference type="FunCoup" id="Q3MHL6">
    <property type="interactions" value="58"/>
</dbReference>
<dbReference type="STRING" id="9913.ENSBTAP00000025431"/>
<dbReference type="PaxDb" id="9913-ENSBTAP00000025431"/>
<dbReference type="Ensembl" id="ENSBTAT00000025431.4">
    <property type="protein sequence ID" value="ENSBTAP00000025431.2"/>
    <property type="gene ID" value="ENSBTAG00000047739.3"/>
</dbReference>
<dbReference type="GeneID" id="510359"/>
<dbReference type="KEGG" id="bta:510359"/>
<dbReference type="CTD" id="8848"/>
<dbReference type="VEuPathDB" id="HostDB:ENSBTAG00000047739"/>
<dbReference type="eggNOG" id="KOG4797">
    <property type="taxonomic scope" value="Eukaryota"/>
</dbReference>
<dbReference type="GeneTree" id="ENSGT00940000163647"/>
<dbReference type="HOGENOM" id="CLU_148757_0_0_1"/>
<dbReference type="InParanoid" id="Q3MHL6"/>
<dbReference type="OMA" id="SMNSSCY"/>
<dbReference type="OrthoDB" id="8961796at2759"/>
<dbReference type="TreeFam" id="TF329224"/>
<dbReference type="Proteomes" id="UP000009136">
    <property type="component" value="Chromosome 12"/>
</dbReference>
<dbReference type="Bgee" id="ENSBTAG00000047739">
    <property type="expression patterns" value="Expressed in myometrium and 104 other cell types or tissues"/>
</dbReference>
<dbReference type="GO" id="GO:0005737">
    <property type="term" value="C:cytoplasm"/>
    <property type="evidence" value="ECO:0000250"/>
    <property type="project" value="UniProtKB"/>
</dbReference>
<dbReference type="GO" id="GO:0005634">
    <property type="term" value="C:nucleus"/>
    <property type="evidence" value="ECO:0007669"/>
    <property type="project" value="UniProtKB-SubCell"/>
</dbReference>
<dbReference type="GO" id="GO:0005886">
    <property type="term" value="C:plasma membrane"/>
    <property type="evidence" value="ECO:0000250"/>
    <property type="project" value="UniProtKB"/>
</dbReference>
<dbReference type="GO" id="GO:1902034">
    <property type="term" value="P:negative regulation of hematopoietic stem cell proliferation"/>
    <property type="evidence" value="ECO:0000250"/>
    <property type="project" value="UniProtKB"/>
</dbReference>
<dbReference type="GO" id="GO:0043065">
    <property type="term" value="P:positive regulation of apoptotic process"/>
    <property type="evidence" value="ECO:0000250"/>
    <property type="project" value="UniProtKB"/>
</dbReference>
<dbReference type="GO" id="GO:0043068">
    <property type="term" value="P:positive regulation of programmed cell death"/>
    <property type="evidence" value="ECO:0000250"/>
    <property type="project" value="UniProtKB"/>
</dbReference>
<dbReference type="GO" id="GO:0030511">
    <property type="term" value="P:positive regulation of transforming growth factor beta receptor signaling pathway"/>
    <property type="evidence" value="ECO:0000250"/>
    <property type="project" value="UniProtKB"/>
</dbReference>
<dbReference type="GO" id="GO:0006357">
    <property type="term" value="P:regulation of transcription by RNA polymerase II"/>
    <property type="evidence" value="ECO:0007669"/>
    <property type="project" value="InterPro"/>
</dbReference>
<dbReference type="CDD" id="cd21938">
    <property type="entry name" value="ZIP_TSC22D1"/>
    <property type="match status" value="1"/>
</dbReference>
<dbReference type="FunFam" id="1.20.5.490:FF:000002">
    <property type="entry name" value="TSC22 domain family, member 1"/>
    <property type="match status" value="1"/>
</dbReference>
<dbReference type="Gene3D" id="1.20.5.490">
    <property type="entry name" value="Single helix bin"/>
    <property type="match status" value="1"/>
</dbReference>
<dbReference type="InterPro" id="IPR000580">
    <property type="entry name" value="TSC22/Bun"/>
</dbReference>
<dbReference type="InterPro" id="IPR047862">
    <property type="entry name" value="TSC22/BUN_CS"/>
</dbReference>
<dbReference type="PANTHER" id="PTHR46745">
    <property type="entry name" value="TSC22 DOMAIN FAMILY PROTEIN 1"/>
    <property type="match status" value="1"/>
</dbReference>
<dbReference type="PANTHER" id="PTHR46745:SF1">
    <property type="entry name" value="TSC22 DOMAIN FAMILY PROTEIN 1"/>
    <property type="match status" value="1"/>
</dbReference>
<dbReference type="Pfam" id="PF01166">
    <property type="entry name" value="TSC22"/>
    <property type="match status" value="1"/>
</dbReference>
<dbReference type="SUPFAM" id="SSF58026">
    <property type="entry name" value="Delta-sleep-inducing peptide immunoreactive peptide"/>
    <property type="match status" value="1"/>
</dbReference>
<dbReference type="PROSITE" id="PS01289">
    <property type="entry name" value="TSC22"/>
    <property type="match status" value="1"/>
</dbReference>
<organism>
    <name type="scientific">Bos taurus</name>
    <name type="common">Bovine</name>
    <dbReference type="NCBI Taxonomy" id="9913"/>
    <lineage>
        <taxon>Eukaryota</taxon>
        <taxon>Metazoa</taxon>
        <taxon>Chordata</taxon>
        <taxon>Craniata</taxon>
        <taxon>Vertebrata</taxon>
        <taxon>Euteleostomi</taxon>
        <taxon>Mammalia</taxon>
        <taxon>Eutheria</taxon>
        <taxon>Laurasiatheria</taxon>
        <taxon>Artiodactyla</taxon>
        <taxon>Ruminantia</taxon>
        <taxon>Pecora</taxon>
        <taxon>Bovidae</taxon>
        <taxon>Bovinae</taxon>
        <taxon>Bos</taxon>
    </lineage>
</organism>
<gene>
    <name evidence="2" type="primary">TSC22D1</name>
</gene>
<keyword id="KW-0963">Cytoplasm</keyword>
<keyword id="KW-0539">Nucleus</keyword>
<keyword id="KW-1185">Reference proteome</keyword>
<keyword id="KW-0678">Repressor</keyword>
<keyword id="KW-0804">Transcription</keyword>
<keyword id="KW-0805">Transcription regulation</keyword>
<name>T22D1_BOVIN</name>
<evidence type="ECO:0000250" key="1">
    <source>
        <dbReference type="UniProtKB" id="P62500"/>
    </source>
</evidence>
<evidence type="ECO:0000250" key="2">
    <source>
        <dbReference type="UniProtKB" id="Q15714"/>
    </source>
</evidence>
<evidence type="ECO:0000256" key="3">
    <source>
        <dbReference type="SAM" id="MobiDB-lite"/>
    </source>
</evidence>
<evidence type="ECO:0000305" key="4"/>